<dbReference type="EC" id="3.4.21.92" evidence="1"/>
<dbReference type="EMBL" id="FM204883">
    <property type="protein sequence ID" value="CAW94984.1"/>
    <property type="molecule type" value="Genomic_DNA"/>
</dbReference>
<dbReference type="RefSeq" id="WP_012677455.1">
    <property type="nucleotide sequence ID" value="NC_012471.1"/>
</dbReference>
<dbReference type="SMR" id="C0M7M8"/>
<dbReference type="MEROPS" id="S14.001"/>
<dbReference type="KEGG" id="seu:SEQ_1832"/>
<dbReference type="HOGENOM" id="CLU_058707_3_2_9"/>
<dbReference type="OrthoDB" id="9802800at2"/>
<dbReference type="Proteomes" id="UP000001365">
    <property type="component" value="Chromosome"/>
</dbReference>
<dbReference type="GO" id="GO:0005737">
    <property type="term" value="C:cytoplasm"/>
    <property type="evidence" value="ECO:0007669"/>
    <property type="project" value="UniProtKB-SubCell"/>
</dbReference>
<dbReference type="GO" id="GO:0009368">
    <property type="term" value="C:endopeptidase Clp complex"/>
    <property type="evidence" value="ECO:0007669"/>
    <property type="project" value="TreeGrafter"/>
</dbReference>
<dbReference type="GO" id="GO:0004176">
    <property type="term" value="F:ATP-dependent peptidase activity"/>
    <property type="evidence" value="ECO:0007669"/>
    <property type="project" value="InterPro"/>
</dbReference>
<dbReference type="GO" id="GO:0051117">
    <property type="term" value="F:ATPase binding"/>
    <property type="evidence" value="ECO:0007669"/>
    <property type="project" value="TreeGrafter"/>
</dbReference>
<dbReference type="GO" id="GO:0004252">
    <property type="term" value="F:serine-type endopeptidase activity"/>
    <property type="evidence" value="ECO:0007669"/>
    <property type="project" value="UniProtKB-UniRule"/>
</dbReference>
<dbReference type="GO" id="GO:0006515">
    <property type="term" value="P:protein quality control for misfolded or incompletely synthesized proteins"/>
    <property type="evidence" value="ECO:0007669"/>
    <property type="project" value="TreeGrafter"/>
</dbReference>
<dbReference type="CDD" id="cd07017">
    <property type="entry name" value="S14_ClpP_2"/>
    <property type="match status" value="1"/>
</dbReference>
<dbReference type="FunFam" id="3.90.226.10:FF:000014">
    <property type="entry name" value="ATP-dependent Clp protease proteolytic subunit"/>
    <property type="match status" value="1"/>
</dbReference>
<dbReference type="Gene3D" id="3.90.226.10">
    <property type="entry name" value="2-enoyl-CoA Hydratase, Chain A, domain 1"/>
    <property type="match status" value="1"/>
</dbReference>
<dbReference type="HAMAP" id="MF_00444">
    <property type="entry name" value="ClpP"/>
    <property type="match status" value="1"/>
</dbReference>
<dbReference type="InterPro" id="IPR001907">
    <property type="entry name" value="ClpP"/>
</dbReference>
<dbReference type="InterPro" id="IPR029045">
    <property type="entry name" value="ClpP/crotonase-like_dom_sf"/>
</dbReference>
<dbReference type="InterPro" id="IPR023562">
    <property type="entry name" value="ClpP/TepA"/>
</dbReference>
<dbReference type="InterPro" id="IPR033135">
    <property type="entry name" value="ClpP_His_AS"/>
</dbReference>
<dbReference type="InterPro" id="IPR018215">
    <property type="entry name" value="ClpP_Ser_AS"/>
</dbReference>
<dbReference type="NCBIfam" id="NF001368">
    <property type="entry name" value="PRK00277.1"/>
    <property type="match status" value="1"/>
</dbReference>
<dbReference type="NCBIfam" id="NF009205">
    <property type="entry name" value="PRK12553.1"/>
    <property type="match status" value="1"/>
</dbReference>
<dbReference type="PANTHER" id="PTHR10381">
    <property type="entry name" value="ATP-DEPENDENT CLP PROTEASE PROTEOLYTIC SUBUNIT"/>
    <property type="match status" value="1"/>
</dbReference>
<dbReference type="PANTHER" id="PTHR10381:SF70">
    <property type="entry name" value="ATP-DEPENDENT CLP PROTEASE PROTEOLYTIC SUBUNIT"/>
    <property type="match status" value="1"/>
</dbReference>
<dbReference type="Pfam" id="PF00574">
    <property type="entry name" value="CLP_protease"/>
    <property type="match status" value="1"/>
</dbReference>
<dbReference type="PRINTS" id="PR00127">
    <property type="entry name" value="CLPPROTEASEP"/>
</dbReference>
<dbReference type="SUPFAM" id="SSF52096">
    <property type="entry name" value="ClpP/crotonase"/>
    <property type="match status" value="1"/>
</dbReference>
<dbReference type="PROSITE" id="PS00382">
    <property type="entry name" value="CLP_PROTEASE_HIS"/>
    <property type="match status" value="1"/>
</dbReference>
<dbReference type="PROSITE" id="PS00381">
    <property type="entry name" value="CLP_PROTEASE_SER"/>
    <property type="match status" value="1"/>
</dbReference>
<gene>
    <name evidence="1" type="primary">clpP</name>
    <name type="ordered locus">SEQ_1832</name>
</gene>
<reference key="1">
    <citation type="journal article" date="2009" name="PLoS Pathog.">
        <title>Genomic evidence for the evolution of Streptococcus equi: host restriction, increased virulence, and genetic exchange with human pathogens.</title>
        <authorList>
            <person name="Holden M.T.G."/>
            <person name="Heather Z."/>
            <person name="Paillot R."/>
            <person name="Steward K.F."/>
            <person name="Webb K."/>
            <person name="Ainslie F."/>
            <person name="Jourdan T."/>
            <person name="Bason N.C."/>
            <person name="Holroyd N.E."/>
            <person name="Mungall K."/>
            <person name="Quail M.A."/>
            <person name="Sanders M."/>
            <person name="Simmonds M."/>
            <person name="Willey D."/>
            <person name="Brooks K."/>
            <person name="Aanensen D.M."/>
            <person name="Spratt B.G."/>
            <person name="Jolley K.A."/>
            <person name="Maiden M.C.J."/>
            <person name="Kehoe M."/>
            <person name="Chanter N."/>
            <person name="Bentley S.D."/>
            <person name="Robinson C."/>
            <person name="Maskell D.J."/>
            <person name="Parkhill J."/>
            <person name="Waller A.S."/>
        </authorList>
    </citation>
    <scope>NUCLEOTIDE SEQUENCE [LARGE SCALE GENOMIC DNA]</scope>
    <source>
        <strain>4047</strain>
    </source>
</reference>
<protein>
    <recommendedName>
        <fullName evidence="1">ATP-dependent Clp protease proteolytic subunit</fullName>
        <ecNumber evidence="1">3.4.21.92</ecNumber>
    </recommendedName>
    <alternativeName>
        <fullName evidence="1">Endopeptidase Clp</fullName>
    </alternativeName>
</protein>
<feature type="chain" id="PRO_1000135165" description="ATP-dependent Clp protease proteolytic subunit">
    <location>
        <begin position="1"/>
        <end position="196"/>
    </location>
</feature>
<feature type="active site" description="Nucleophile" evidence="1">
    <location>
        <position position="96"/>
    </location>
</feature>
<feature type="active site" evidence="1">
    <location>
        <position position="121"/>
    </location>
</feature>
<sequence length="196" mass="21562">MIPVVIEQTSRGERSYDIYSRLLKDRIIMLTGPVEDNMANSVIAQLLFLDAQDNTKDIYLYVNTPGGSVSAGLAIVDTMNFIKADVQTIVMGMAASMGTVIASSGAKGKRFMLPNAEYMIHQPMGGTGGGTQQTDMAIAAEHLLKTRHRLEKILAQNAGKTIKQIHKDAERDYWMSAEETLAYGFIDEIMENNELA</sequence>
<organism>
    <name type="scientific">Streptococcus equi subsp. equi (strain 4047)</name>
    <dbReference type="NCBI Taxonomy" id="553482"/>
    <lineage>
        <taxon>Bacteria</taxon>
        <taxon>Bacillati</taxon>
        <taxon>Bacillota</taxon>
        <taxon>Bacilli</taxon>
        <taxon>Lactobacillales</taxon>
        <taxon>Streptococcaceae</taxon>
        <taxon>Streptococcus</taxon>
    </lineage>
</organism>
<comment type="function">
    <text evidence="1">Cleaves peptides in various proteins in a process that requires ATP hydrolysis. Has a chymotrypsin-like activity. Plays a major role in the degradation of misfolded proteins.</text>
</comment>
<comment type="catalytic activity">
    <reaction evidence="1">
        <text>Hydrolysis of proteins to small peptides in the presence of ATP and magnesium. alpha-casein is the usual test substrate. In the absence of ATP, only oligopeptides shorter than five residues are hydrolyzed (such as succinyl-Leu-Tyr-|-NHMec, and Leu-Tyr-Leu-|-Tyr-Trp, in which cleavage of the -Tyr-|-Leu- and -Tyr-|-Trp bonds also occurs).</text>
        <dbReference type="EC" id="3.4.21.92"/>
    </reaction>
</comment>
<comment type="subunit">
    <text evidence="1">Fourteen ClpP subunits assemble into 2 heptameric rings which stack back to back to give a disk-like structure with a central cavity, resembling the structure of eukaryotic proteasomes.</text>
</comment>
<comment type="subcellular location">
    <subcellularLocation>
        <location evidence="1">Cytoplasm</location>
    </subcellularLocation>
</comment>
<comment type="similarity">
    <text evidence="1">Belongs to the peptidase S14 family.</text>
</comment>
<proteinExistence type="inferred from homology"/>
<accession>C0M7M8</accession>
<name>CLPP_STRE4</name>
<evidence type="ECO:0000255" key="1">
    <source>
        <dbReference type="HAMAP-Rule" id="MF_00444"/>
    </source>
</evidence>
<keyword id="KW-0963">Cytoplasm</keyword>
<keyword id="KW-0378">Hydrolase</keyword>
<keyword id="KW-0645">Protease</keyword>
<keyword id="KW-0720">Serine protease</keyword>